<dbReference type="EMBL" id="CP000736">
    <property type="protein sequence ID" value="ABR53533.1"/>
    <property type="molecule type" value="Genomic_DNA"/>
</dbReference>
<dbReference type="SMR" id="A6U515"/>
<dbReference type="KEGG" id="sah:SaurJH1_2711"/>
<dbReference type="HOGENOM" id="CLU_1160528_0_0_9"/>
<dbReference type="GO" id="GO:0005737">
    <property type="term" value="C:cytoplasm"/>
    <property type="evidence" value="ECO:0007669"/>
    <property type="project" value="UniProtKB-SubCell"/>
</dbReference>
<dbReference type="GO" id="GO:0030552">
    <property type="term" value="F:cAMP binding"/>
    <property type="evidence" value="ECO:0007669"/>
    <property type="project" value="UniProtKB-KW"/>
</dbReference>
<dbReference type="GO" id="GO:0003677">
    <property type="term" value="F:DNA binding"/>
    <property type="evidence" value="ECO:0007669"/>
    <property type="project" value="UniProtKB-KW"/>
</dbReference>
<dbReference type="GO" id="GO:0006355">
    <property type="term" value="P:regulation of DNA-templated transcription"/>
    <property type="evidence" value="ECO:0007669"/>
    <property type="project" value="InterPro"/>
</dbReference>
<dbReference type="Gene3D" id="2.60.120.10">
    <property type="entry name" value="Jelly Rolls"/>
    <property type="match status" value="1"/>
</dbReference>
<dbReference type="Gene3D" id="1.10.10.10">
    <property type="entry name" value="Winged helix-like DNA-binding domain superfamily/Winged helix DNA-binding domain"/>
    <property type="match status" value="1"/>
</dbReference>
<dbReference type="InterPro" id="IPR000595">
    <property type="entry name" value="cNMP-bd_dom"/>
</dbReference>
<dbReference type="InterPro" id="IPR018490">
    <property type="entry name" value="cNMP-bd_dom_sf"/>
</dbReference>
<dbReference type="InterPro" id="IPR012318">
    <property type="entry name" value="HTH_CRP"/>
</dbReference>
<dbReference type="InterPro" id="IPR014710">
    <property type="entry name" value="RmlC-like_jellyroll"/>
</dbReference>
<dbReference type="InterPro" id="IPR036388">
    <property type="entry name" value="WH-like_DNA-bd_sf"/>
</dbReference>
<dbReference type="InterPro" id="IPR036390">
    <property type="entry name" value="WH_DNA-bd_sf"/>
</dbReference>
<dbReference type="Pfam" id="PF00027">
    <property type="entry name" value="cNMP_binding"/>
    <property type="match status" value="1"/>
</dbReference>
<dbReference type="Pfam" id="PF13545">
    <property type="entry name" value="HTH_Crp_2"/>
    <property type="match status" value="1"/>
</dbReference>
<dbReference type="SUPFAM" id="SSF51206">
    <property type="entry name" value="cAMP-binding domain-like"/>
    <property type="match status" value="1"/>
</dbReference>
<dbReference type="SUPFAM" id="SSF46785">
    <property type="entry name" value="Winged helix' DNA-binding domain"/>
    <property type="match status" value="1"/>
</dbReference>
<dbReference type="PROSITE" id="PS51063">
    <property type="entry name" value="HTH_CRP_2"/>
    <property type="match status" value="1"/>
</dbReference>
<comment type="function">
    <text evidence="1">Positively regulates the expression of the arcABDCR operon under anaerobic conditions, thus playing an essential role in arginine catabolism. May also control the expression of genes encoding proteins which are involved in anaerobic metabolism. Can bind cyclic AMP (By similarity).</text>
</comment>
<comment type="subcellular location">
    <subcellularLocation>
        <location evidence="1">Cytoplasm</location>
    </subcellularLocation>
</comment>
<name>ARCR_STAA2</name>
<protein>
    <recommendedName>
        <fullName>HTH-type transcriptional regulator ArcR</fullName>
    </recommendedName>
</protein>
<keyword id="KW-0010">Activator</keyword>
<keyword id="KW-0114">cAMP</keyword>
<keyword id="KW-0116">cAMP-binding</keyword>
<keyword id="KW-0963">Cytoplasm</keyword>
<keyword id="KW-0238">DNA-binding</keyword>
<keyword id="KW-0547">Nucleotide-binding</keyword>
<keyword id="KW-0804">Transcription</keyword>
<keyword id="KW-0805">Transcription regulation</keyword>
<evidence type="ECO:0000250" key="1"/>
<evidence type="ECO:0000255" key="2">
    <source>
        <dbReference type="PROSITE-ProRule" id="PRU00387"/>
    </source>
</evidence>
<sequence>MTENFILGRNNKLEHELKALADYINIPYSILQPYQSECFVRHYTKGQVIYFSPQESSNIYFLIEGNIIREHYNQNGDVYRYFNKEQVLFPISNLFHPKEVNELCTALTDCTVLGLPRELMAFLCKANDDIFLTLFALINDNEQQHMNYNMALTSKFAKDRIIKLLCHLCQTVGYDQDEFYEIKQFLTIQLMSDMAGISRETAGHIIHELKDEKLVVKDHKNWLVSKHLFNDVCV</sequence>
<gene>
    <name type="primary">arcR</name>
    <name type="ordered locus">SaurJH1_2711</name>
</gene>
<accession>A6U515</accession>
<proteinExistence type="inferred from homology"/>
<reference key="1">
    <citation type="submission" date="2007-06" db="EMBL/GenBank/DDBJ databases">
        <title>Complete sequence of chromosome of Staphylococcus aureus subsp. aureus JH1.</title>
        <authorList>
            <consortium name="US DOE Joint Genome Institute"/>
            <person name="Copeland A."/>
            <person name="Lucas S."/>
            <person name="Lapidus A."/>
            <person name="Barry K."/>
            <person name="Detter J.C."/>
            <person name="Glavina del Rio T."/>
            <person name="Hammon N."/>
            <person name="Israni S."/>
            <person name="Dalin E."/>
            <person name="Tice H."/>
            <person name="Pitluck S."/>
            <person name="Chain P."/>
            <person name="Malfatti S."/>
            <person name="Shin M."/>
            <person name="Vergez L."/>
            <person name="Schmutz J."/>
            <person name="Larimer F."/>
            <person name="Land M."/>
            <person name="Hauser L."/>
            <person name="Kyrpides N."/>
            <person name="Ivanova N."/>
            <person name="Tomasz A."/>
            <person name="Richardson P."/>
        </authorList>
    </citation>
    <scope>NUCLEOTIDE SEQUENCE [LARGE SCALE GENOMIC DNA]</scope>
    <source>
        <strain>JH1</strain>
    </source>
</reference>
<organism>
    <name type="scientific">Staphylococcus aureus (strain JH1)</name>
    <dbReference type="NCBI Taxonomy" id="359787"/>
    <lineage>
        <taxon>Bacteria</taxon>
        <taxon>Bacillati</taxon>
        <taxon>Bacillota</taxon>
        <taxon>Bacilli</taxon>
        <taxon>Bacillales</taxon>
        <taxon>Staphylococcaceae</taxon>
        <taxon>Staphylococcus</taxon>
    </lineage>
</organism>
<feature type="chain" id="PRO_0000349406" description="HTH-type transcriptional regulator ArcR">
    <location>
        <begin position="1"/>
        <end position="234"/>
    </location>
</feature>
<feature type="domain" description="HTH crp-type" evidence="2">
    <location>
        <begin position="155"/>
        <end position="228"/>
    </location>
</feature>
<feature type="DNA-binding region" description="H-T-H motif" evidence="2">
    <location>
        <begin position="188"/>
        <end position="207"/>
    </location>
</feature>
<feature type="binding site">
    <location>
        <begin position="40"/>
        <end position="129"/>
    </location>
    <ligand>
        <name>a nucleoside 3',5'-cyclic phosphate</name>
        <dbReference type="ChEBI" id="CHEBI:58464"/>
    </ligand>
</feature>